<name>SCX36_CENSC</name>
<dbReference type="SMR" id="C0HMA9"/>
<dbReference type="GO" id="GO:0005576">
    <property type="term" value="C:extracellular region"/>
    <property type="evidence" value="ECO:0007669"/>
    <property type="project" value="UniProtKB-SubCell"/>
</dbReference>
<dbReference type="GO" id="GO:0019871">
    <property type="term" value="F:sodium channel inhibitor activity"/>
    <property type="evidence" value="ECO:0007669"/>
    <property type="project" value="InterPro"/>
</dbReference>
<dbReference type="GO" id="GO:0090729">
    <property type="term" value="F:toxin activity"/>
    <property type="evidence" value="ECO:0007669"/>
    <property type="project" value="UniProtKB-KW"/>
</dbReference>
<dbReference type="GO" id="GO:0006952">
    <property type="term" value="P:defense response"/>
    <property type="evidence" value="ECO:0007669"/>
    <property type="project" value="InterPro"/>
</dbReference>
<dbReference type="CDD" id="cd23106">
    <property type="entry name" value="neurotoxins_LC_scorpion"/>
    <property type="match status" value="1"/>
</dbReference>
<dbReference type="FunFam" id="3.30.30.10:FF:000002">
    <property type="entry name" value="Alpha-like toxin BmK-M1"/>
    <property type="match status" value="1"/>
</dbReference>
<dbReference type="Gene3D" id="3.30.30.10">
    <property type="entry name" value="Knottin, scorpion toxin-like"/>
    <property type="match status" value="1"/>
</dbReference>
<dbReference type="InterPro" id="IPR044062">
    <property type="entry name" value="LCN-type_CS_alpha_beta_dom"/>
</dbReference>
<dbReference type="InterPro" id="IPR003614">
    <property type="entry name" value="Scorpion_toxin-like"/>
</dbReference>
<dbReference type="InterPro" id="IPR036574">
    <property type="entry name" value="Scorpion_toxin-like_sf"/>
</dbReference>
<dbReference type="InterPro" id="IPR018218">
    <property type="entry name" value="Scorpion_toxinL"/>
</dbReference>
<dbReference type="InterPro" id="IPR002061">
    <property type="entry name" value="Scorpion_toxinL/defensin"/>
</dbReference>
<dbReference type="Pfam" id="PF00537">
    <property type="entry name" value="Toxin_3"/>
    <property type="match status" value="1"/>
</dbReference>
<dbReference type="PRINTS" id="PR00285">
    <property type="entry name" value="SCORPNTOXIN"/>
</dbReference>
<dbReference type="SMART" id="SM00505">
    <property type="entry name" value="Knot1"/>
    <property type="match status" value="1"/>
</dbReference>
<dbReference type="SUPFAM" id="SSF57095">
    <property type="entry name" value="Scorpion toxin-like"/>
    <property type="match status" value="1"/>
</dbReference>
<dbReference type="PROSITE" id="PS51863">
    <property type="entry name" value="LCN_CSAB"/>
    <property type="match status" value="1"/>
</dbReference>
<organism>
    <name type="scientific">Centruroides sculpturatus</name>
    <name type="common">Arizona bark scorpion</name>
    <dbReference type="NCBI Taxonomy" id="218467"/>
    <lineage>
        <taxon>Eukaryota</taxon>
        <taxon>Metazoa</taxon>
        <taxon>Ecdysozoa</taxon>
        <taxon>Arthropoda</taxon>
        <taxon>Chelicerata</taxon>
        <taxon>Arachnida</taxon>
        <taxon>Scorpiones</taxon>
        <taxon>Buthida</taxon>
        <taxon>Buthoidea</taxon>
        <taxon>Buthidae</taxon>
        <taxon>Centruroides</taxon>
    </lineage>
</organism>
<protein>
    <recommendedName>
        <fullName evidence="5">Beta-toxin NaTx36</fullName>
        <shortName evidence="4">NaTx-36</shortName>
    </recommendedName>
</protein>
<reference key="1">
    <citation type="journal article" date="2021" name="Toxins">
        <title>Identification and characterization of novel proteins from Arizona Bark scorpion venom that inhibit Nav1.8, a voltage-gated sodium channel regulator of pain signaling.</title>
        <authorList>
            <person name="Abd El-Aziz T.M."/>
            <person name="Xiao Y."/>
            <person name="Kline J."/>
            <person name="Gridley H."/>
            <person name="Heaston A."/>
            <person name="Linse K.D."/>
            <person name="Ward M.J."/>
            <person name="Rokyta D.R."/>
            <person name="Stockand J.D."/>
            <person name="Cummins T.R."/>
            <person name="Fornelli L."/>
            <person name="Rowe A.H."/>
        </authorList>
    </citation>
    <scope>NUCLEOTIDE SEQUENCE [MRNA]</scope>
    <scope>PROTEIN SEQUENCE OF 41-60</scope>
    <scope>IDENTIFICATION BY MASS SPECTROMETRY</scope>
    <scope>SUBCELLULAR LOCATION</scope>
    <source>
        <tissue>Venom</tissue>
        <tissue>Venom gland</tissue>
    </source>
</reference>
<reference key="2">
    <citation type="journal article" date="2022" name="Front. Pharmacol.">
        <title>Structural and functional characterization of a novel scorpion toxin that inhibits NaV1.8 via interactions with the DI voltage sensor and DII pore module.</title>
        <authorList>
            <person name="George K."/>
            <person name="Lopez-Mateos D."/>
            <person name="Abd El-Aziz T.M."/>
            <person name="Xiao Y."/>
            <person name="Kline J."/>
            <person name="Bao H."/>
            <person name="Raza S."/>
            <person name="Stockand J.D."/>
            <person name="Cummins T.R."/>
            <person name="Fornelli L."/>
            <person name="Rowe M.P."/>
            <person name="Yarov-Yarovoy V."/>
            <person name="Rowe A.H."/>
        </authorList>
    </citation>
    <scope>FUNCTION</scope>
    <scope>SYNTHESIS</scope>
    <scope>3D-STRUCTURE MODELING IN COMPLEX WITH GRASSHOPPER MOUSE NAV1.8 SODIUM CHANNEL</scope>
</reference>
<accession>C0HMA9</accession>
<comment type="function">
    <text evidence="3">Beta toxins bind sodium channels (Nav) and shift the voltage of activation towards more negative potentials thereby affecting sodium channel activation and promoting spontaneous and repetitive firing. Only when tested on grasshopper mouse channels, this toxin inhibits Nav1.8/SCN10A sodium currents in a concentration and voltage-dependent manner (IC(50)=680 nM). This toxin hyperpolarizes the voltage dependence of Nav1.8/SCN10A activation, as well as steady-state fast inactivation and slow inactivation. In contrast to most beta scorpion toxins, this toxin inhibits grasshopper mouse Nav1.8/SCN10A currents through modulation of the domain I S4 voltage sensor, and the domain II second S5-S6 extracellular pore loop.</text>
</comment>
<comment type="subcellular location">
    <subcellularLocation>
        <location evidence="2">Secreted</location>
    </subcellularLocation>
</comment>
<comment type="tissue specificity">
    <text evidence="7">Expressed by the venom gland.</text>
</comment>
<comment type="miscellaneous">
    <text evidence="8">Main studies are carried out on the Nav1.8/SCN10A sodium channel of the grasshopper mouse (Onychomys torridus) which preys on C.sculpturatus and has therefore developed resistance to venom-induced pain (in contrast to house mice that are sensitive to venom of this scorpion).</text>
</comment>
<comment type="miscellaneous">
    <text evidence="3">Negative results: has no effect on human Nav1.8/SCN10A sodium channel, that is highly similar to house mouse Nav1.8/SCN10A sodium channel.</text>
</comment>
<comment type="similarity">
    <text evidence="6">Belongs to the long (4 C-C) scorpion toxin superfamily. Sodium channel inhibitor family. Beta subfamily.</text>
</comment>
<sequence length="63" mass="7200">KDGYPMRSDGCTIACLFDNDFCNRKCVEQKGKSGYCYFWKQSCYCEGLPDDKVYDSATSKCRA</sequence>
<evidence type="ECO:0000255" key="1">
    <source>
        <dbReference type="PROSITE-ProRule" id="PRU01210"/>
    </source>
</evidence>
<evidence type="ECO:0000269" key="2">
    <source>
    </source>
</evidence>
<evidence type="ECO:0000269" key="3">
    <source>
    </source>
</evidence>
<evidence type="ECO:0000303" key="4">
    <source>
    </source>
</evidence>
<evidence type="ECO:0000303" key="5">
    <source>
    </source>
</evidence>
<evidence type="ECO:0000305" key="6"/>
<evidence type="ECO:0000305" key="7">
    <source>
    </source>
</evidence>
<evidence type="ECO:0000305" key="8">
    <source>
    </source>
</evidence>
<feature type="chain" id="PRO_0000459711" description="Beta-toxin NaTx36" evidence="7">
    <location>
        <begin position="1"/>
        <end position="63"/>
    </location>
</feature>
<feature type="domain" description="LCN-type CS-alpha/beta" evidence="1">
    <location>
        <begin position="1"/>
        <end position="62"/>
    </location>
</feature>
<feature type="disulfide bond" evidence="1">
    <location>
        <begin position="11"/>
        <end position="61"/>
    </location>
</feature>
<feature type="disulfide bond" evidence="1">
    <location>
        <begin position="15"/>
        <end position="36"/>
    </location>
</feature>
<feature type="disulfide bond" evidence="1">
    <location>
        <begin position="22"/>
        <end position="43"/>
    </location>
</feature>
<feature type="disulfide bond" evidence="1">
    <location>
        <begin position="26"/>
        <end position="45"/>
    </location>
</feature>
<proteinExistence type="evidence at protein level"/>
<keyword id="KW-0903">Direct protein sequencing</keyword>
<keyword id="KW-1015">Disulfide bond</keyword>
<keyword id="KW-0872">Ion channel impairing toxin</keyword>
<keyword id="KW-0528">Neurotoxin</keyword>
<keyword id="KW-0964">Secreted</keyword>
<keyword id="KW-0800">Toxin</keyword>